<name>Y3148_BURTA</name>
<dbReference type="EMBL" id="CP000086">
    <property type="protein sequence ID" value="ABC39264.1"/>
    <property type="status" value="ALT_INIT"/>
    <property type="molecule type" value="Genomic_DNA"/>
</dbReference>
<dbReference type="RefSeq" id="WP_009910065.1">
    <property type="nucleotide sequence ID" value="NZ_CP008786.1"/>
</dbReference>
<dbReference type="SMR" id="Q2STV7"/>
<dbReference type="GeneID" id="45122830"/>
<dbReference type="KEGG" id="bte:BTH_I3148"/>
<dbReference type="HOGENOM" id="CLU_115353_1_0_4"/>
<dbReference type="Proteomes" id="UP000001930">
    <property type="component" value="Chromosome I"/>
</dbReference>
<dbReference type="GO" id="GO:0003676">
    <property type="term" value="F:nucleic acid binding"/>
    <property type="evidence" value="ECO:0007669"/>
    <property type="project" value="InterPro"/>
</dbReference>
<dbReference type="Gene3D" id="3.40.1350.10">
    <property type="match status" value="1"/>
</dbReference>
<dbReference type="HAMAP" id="MF_00048">
    <property type="entry name" value="UPF0102"/>
    <property type="match status" value="1"/>
</dbReference>
<dbReference type="InterPro" id="IPR011335">
    <property type="entry name" value="Restrct_endonuc-II-like"/>
</dbReference>
<dbReference type="InterPro" id="IPR011856">
    <property type="entry name" value="tRNA_endonuc-like_dom_sf"/>
</dbReference>
<dbReference type="InterPro" id="IPR003509">
    <property type="entry name" value="UPF0102_YraN-like"/>
</dbReference>
<dbReference type="NCBIfam" id="NF009150">
    <property type="entry name" value="PRK12497.1-3"/>
    <property type="match status" value="1"/>
</dbReference>
<dbReference type="NCBIfam" id="TIGR00252">
    <property type="entry name" value="YraN family protein"/>
    <property type="match status" value="1"/>
</dbReference>
<dbReference type="PANTHER" id="PTHR34039">
    <property type="entry name" value="UPF0102 PROTEIN YRAN"/>
    <property type="match status" value="1"/>
</dbReference>
<dbReference type="PANTHER" id="PTHR34039:SF1">
    <property type="entry name" value="UPF0102 PROTEIN YRAN"/>
    <property type="match status" value="1"/>
</dbReference>
<dbReference type="Pfam" id="PF02021">
    <property type="entry name" value="UPF0102"/>
    <property type="match status" value="1"/>
</dbReference>
<dbReference type="SUPFAM" id="SSF52980">
    <property type="entry name" value="Restriction endonuclease-like"/>
    <property type="match status" value="1"/>
</dbReference>
<reference key="1">
    <citation type="journal article" date="2005" name="BMC Genomics">
        <title>Bacterial genome adaptation to niches: divergence of the potential virulence genes in three Burkholderia species of different survival strategies.</title>
        <authorList>
            <person name="Kim H.S."/>
            <person name="Schell M.A."/>
            <person name="Yu Y."/>
            <person name="Ulrich R.L."/>
            <person name="Sarria S.H."/>
            <person name="Nierman W.C."/>
            <person name="DeShazer D."/>
        </authorList>
    </citation>
    <scope>NUCLEOTIDE SEQUENCE [LARGE SCALE GENOMIC DNA]</scope>
    <source>
        <strain>ATCC 700388 / DSM 13276 / CCUG 48851 / CIP 106301 / E264</strain>
    </source>
</reference>
<protein>
    <recommendedName>
        <fullName evidence="1">UPF0102 protein BTH_I3148</fullName>
    </recommendedName>
</protein>
<sequence length="144" mass="15619">MCHARAARQATGEAEAAPRDNFSKAAGSKRVVGAAFETRAQRFLERAGLAPVARNVTVRGGEIDLVMRERDGTLVFVEVRARTSGRYGGAAASIGARKRMRLLHAAHLFWARMGGASACRFDVVAFEGGRLVWLRDAFRADETA</sequence>
<accession>Q2STV7</accession>
<evidence type="ECO:0000255" key="1">
    <source>
        <dbReference type="HAMAP-Rule" id="MF_00048"/>
    </source>
</evidence>
<evidence type="ECO:0000256" key="2">
    <source>
        <dbReference type="SAM" id="MobiDB-lite"/>
    </source>
</evidence>
<evidence type="ECO:0000305" key="3"/>
<feature type="chain" id="PRO_0000336149" description="UPF0102 protein BTH_I3148">
    <location>
        <begin position="1"/>
        <end position="144"/>
    </location>
</feature>
<feature type="region of interest" description="Disordered" evidence="2">
    <location>
        <begin position="1"/>
        <end position="20"/>
    </location>
</feature>
<proteinExistence type="inferred from homology"/>
<comment type="similarity">
    <text evidence="1">Belongs to the UPF0102 family.</text>
</comment>
<comment type="sequence caution" evidence="3">
    <conflict type="erroneous initiation">
        <sequence resource="EMBL-CDS" id="ABC39264"/>
    </conflict>
</comment>
<gene>
    <name type="ordered locus">BTH_I3148</name>
</gene>
<organism>
    <name type="scientific">Burkholderia thailandensis (strain ATCC 700388 / DSM 13276 / CCUG 48851 / CIP 106301 / E264)</name>
    <dbReference type="NCBI Taxonomy" id="271848"/>
    <lineage>
        <taxon>Bacteria</taxon>
        <taxon>Pseudomonadati</taxon>
        <taxon>Pseudomonadota</taxon>
        <taxon>Betaproteobacteria</taxon>
        <taxon>Burkholderiales</taxon>
        <taxon>Burkholderiaceae</taxon>
        <taxon>Burkholderia</taxon>
        <taxon>pseudomallei group</taxon>
    </lineage>
</organism>